<reference key="1">
    <citation type="journal article" date="1998" name="Nature">
        <title>Deciphering the biology of Mycobacterium tuberculosis from the complete genome sequence.</title>
        <authorList>
            <person name="Cole S.T."/>
            <person name="Brosch R."/>
            <person name="Parkhill J."/>
            <person name="Garnier T."/>
            <person name="Churcher C.M."/>
            <person name="Harris D.E."/>
            <person name="Gordon S.V."/>
            <person name="Eiglmeier K."/>
            <person name="Gas S."/>
            <person name="Barry C.E. III"/>
            <person name="Tekaia F."/>
            <person name="Badcock K."/>
            <person name="Basham D."/>
            <person name="Brown D."/>
            <person name="Chillingworth T."/>
            <person name="Connor R."/>
            <person name="Davies R.M."/>
            <person name="Devlin K."/>
            <person name="Feltwell T."/>
            <person name="Gentles S."/>
            <person name="Hamlin N."/>
            <person name="Holroyd S."/>
            <person name="Hornsby T."/>
            <person name="Jagels K."/>
            <person name="Krogh A."/>
            <person name="McLean J."/>
            <person name="Moule S."/>
            <person name="Murphy L.D."/>
            <person name="Oliver S."/>
            <person name="Osborne J."/>
            <person name="Quail M.A."/>
            <person name="Rajandream M.A."/>
            <person name="Rogers J."/>
            <person name="Rutter S."/>
            <person name="Seeger K."/>
            <person name="Skelton S."/>
            <person name="Squares S."/>
            <person name="Squares R."/>
            <person name="Sulston J.E."/>
            <person name="Taylor K."/>
            <person name="Whitehead S."/>
            <person name="Barrell B.G."/>
        </authorList>
    </citation>
    <scope>NUCLEOTIDE SEQUENCE [LARGE SCALE GENOMIC DNA]</scope>
    <source>
        <strain>ATCC 25618 / H37Rv</strain>
    </source>
</reference>
<reference key="2">
    <citation type="journal article" date="2011" name="Mol. Cell. Proteomics">
        <title>Proteogenomic analysis of Mycobacterium tuberculosis by high resolution mass spectrometry.</title>
        <authorList>
            <person name="Kelkar D.S."/>
            <person name="Kumar D."/>
            <person name="Kumar P."/>
            <person name="Balakrishnan L."/>
            <person name="Muthusamy B."/>
            <person name="Yadav A.K."/>
            <person name="Shrivastava P."/>
            <person name="Marimuthu A."/>
            <person name="Anand S."/>
            <person name="Sundaram H."/>
            <person name="Kingsbury R."/>
            <person name="Harsha H.C."/>
            <person name="Nair B."/>
            <person name="Prasad T.S."/>
            <person name="Chauhan D.S."/>
            <person name="Katoch K."/>
            <person name="Katoch V.M."/>
            <person name="Kumar P."/>
            <person name="Chaerkady R."/>
            <person name="Ramachandran S."/>
            <person name="Dash D."/>
            <person name="Pandey A."/>
        </authorList>
    </citation>
    <scope>IDENTIFICATION BY MASS SPECTROMETRY [LARGE SCALE ANALYSIS]</scope>
    <source>
        <strain>ATCC 25618 / H37Rv</strain>
    </source>
</reference>
<sequence>MSPPNQDAQEGRPDSPTAEVVDVRRGMFGVSGTGDTSGYGRLVRQVVLPGSSPRPYGGYFDDIVDRLAEALRHERVEFEDAVEKVVVYRDELTLHVRRDLLPRVAQRLRDEPELRFELCLGVSGVHYPHETGRELHAVYPLQSITHNRRLRLEVSAPDSDPHIPSLFAIYPTNDWHERETYDFFGIIFDGHPALTRIEMPDDWQGHPQRKDYPLGGIPVEYKGAQIPPPDERRGYN</sequence>
<gene>
    <name evidence="1" type="primary">nuoC</name>
    <name type="ordered locus">Rv3147</name>
    <name type="ORF">MTCY03A2.11c</name>
</gene>
<accession>P9WJH3</accession>
<accession>L0TBZ2</accession>
<accession>P65571</accession>
<accession>P95179</accession>
<name>NUOC_MYCTU</name>
<keyword id="KW-1003">Cell membrane</keyword>
<keyword id="KW-0472">Membrane</keyword>
<keyword id="KW-0520">NAD</keyword>
<keyword id="KW-0874">Quinone</keyword>
<keyword id="KW-1185">Reference proteome</keyword>
<keyword id="KW-1278">Translocase</keyword>
<keyword id="KW-0813">Transport</keyword>
<organism>
    <name type="scientific">Mycobacterium tuberculosis (strain ATCC 25618 / H37Rv)</name>
    <dbReference type="NCBI Taxonomy" id="83332"/>
    <lineage>
        <taxon>Bacteria</taxon>
        <taxon>Bacillati</taxon>
        <taxon>Actinomycetota</taxon>
        <taxon>Actinomycetes</taxon>
        <taxon>Mycobacteriales</taxon>
        <taxon>Mycobacteriaceae</taxon>
        <taxon>Mycobacterium</taxon>
        <taxon>Mycobacterium tuberculosis complex</taxon>
    </lineage>
</organism>
<dbReference type="EC" id="7.1.1.-" evidence="1"/>
<dbReference type="EMBL" id="AL123456">
    <property type="protein sequence ID" value="CCP45958.1"/>
    <property type="molecule type" value="Genomic_DNA"/>
</dbReference>
<dbReference type="PIR" id="D70647">
    <property type="entry name" value="D70647"/>
</dbReference>
<dbReference type="RefSeq" id="NP_217663.1">
    <property type="nucleotide sequence ID" value="NC_000962.3"/>
</dbReference>
<dbReference type="RefSeq" id="WP_003416425.1">
    <property type="nucleotide sequence ID" value="NZ_NVQJ01000019.1"/>
</dbReference>
<dbReference type="SMR" id="P9WJH3"/>
<dbReference type="FunCoup" id="P9WJH3">
    <property type="interactions" value="122"/>
</dbReference>
<dbReference type="STRING" id="83332.Rv3147"/>
<dbReference type="PaxDb" id="83332-Rv3147"/>
<dbReference type="DNASU" id="888816"/>
<dbReference type="GeneID" id="888816"/>
<dbReference type="KEGG" id="mtu:Rv3147"/>
<dbReference type="KEGG" id="mtv:RVBD_3147"/>
<dbReference type="TubercuList" id="Rv3147"/>
<dbReference type="eggNOG" id="COG0852">
    <property type="taxonomic scope" value="Bacteria"/>
</dbReference>
<dbReference type="InParanoid" id="P9WJH3"/>
<dbReference type="OrthoDB" id="9803286at2"/>
<dbReference type="PhylomeDB" id="P9WJH3"/>
<dbReference type="Proteomes" id="UP000001584">
    <property type="component" value="Chromosome"/>
</dbReference>
<dbReference type="GO" id="GO:0005829">
    <property type="term" value="C:cytosol"/>
    <property type="evidence" value="ECO:0007005"/>
    <property type="project" value="MTBBASE"/>
</dbReference>
<dbReference type="GO" id="GO:0005886">
    <property type="term" value="C:plasma membrane"/>
    <property type="evidence" value="ECO:0007669"/>
    <property type="project" value="UniProtKB-SubCell"/>
</dbReference>
<dbReference type="GO" id="GO:0008137">
    <property type="term" value="F:NADH dehydrogenase (ubiquinone) activity"/>
    <property type="evidence" value="ECO:0007669"/>
    <property type="project" value="InterPro"/>
</dbReference>
<dbReference type="GO" id="GO:0050136">
    <property type="term" value="F:NADH:ubiquinone reductase (non-electrogenic) activity"/>
    <property type="evidence" value="ECO:0007669"/>
    <property type="project" value="UniProtKB-UniRule"/>
</dbReference>
<dbReference type="GO" id="GO:0048038">
    <property type="term" value="F:quinone binding"/>
    <property type="evidence" value="ECO:0007669"/>
    <property type="project" value="UniProtKB-KW"/>
</dbReference>
<dbReference type="FunFam" id="3.30.460.80:FF:000006">
    <property type="entry name" value="NADH-quinone oxidoreductase subunit C"/>
    <property type="match status" value="1"/>
</dbReference>
<dbReference type="Gene3D" id="3.30.460.80">
    <property type="entry name" value="NADH:ubiquinone oxidoreductase, 30kDa subunit"/>
    <property type="match status" value="1"/>
</dbReference>
<dbReference type="HAMAP" id="MF_01357">
    <property type="entry name" value="NDH1_NuoC"/>
    <property type="match status" value="1"/>
</dbReference>
<dbReference type="InterPro" id="IPR010218">
    <property type="entry name" value="NADH_DH_suC"/>
</dbReference>
<dbReference type="InterPro" id="IPR037232">
    <property type="entry name" value="NADH_quin_OxRdtase_su_C/D-like"/>
</dbReference>
<dbReference type="InterPro" id="IPR001268">
    <property type="entry name" value="NADH_UbQ_OxRdtase_30kDa_su"/>
</dbReference>
<dbReference type="NCBIfam" id="TIGR01961">
    <property type="entry name" value="NuoC_fam"/>
    <property type="match status" value="1"/>
</dbReference>
<dbReference type="NCBIfam" id="NF005856">
    <property type="entry name" value="PRK07785.1"/>
    <property type="match status" value="1"/>
</dbReference>
<dbReference type="PANTHER" id="PTHR10884:SF14">
    <property type="entry name" value="NADH DEHYDROGENASE [UBIQUINONE] IRON-SULFUR PROTEIN 3, MITOCHONDRIAL"/>
    <property type="match status" value="1"/>
</dbReference>
<dbReference type="PANTHER" id="PTHR10884">
    <property type="entry name" value="NADH DEHYDROGENASE UBIQUINONE IRON-SULFUR PROTEIN 3"/>
    <property type="match status" value="1"/>
</dbReference>
<dbReference type="Pfam" id="PF00329">
    <property type="entry name" value="Complex1_30kDa"/>
    <property type="match status" value="1"/>
</dbReference>
<dbReference type="SUPFAM" id="SSF143243">
    <property type="entry name" value="Nqo5-like"/>
    <property type="match status" value="1"/>
</dbReference>
<evidence type="ECO:0000255" key="1">
    <source>
        <dbReference type="HAMAP-Rule" id="MF_01357"/>
    </source>
</evidence>
<evidence type="ECO:0000256" key="2">
    <source>
        <dbReference type="SAM" id="MobiDB-lite"/>
    </source>
</evidence>
<protein>
    <recommendedName>
        <fullName evidence="1">NADH-quinone oxidoreductase subunit C</fullName>
        <ecNumber evidence="1">7.1.1.-</ecNumber>
    </recommendedName>
    <alternativeName>
        <fullName evidence="1">NADH dehydrogenase I subunit C</fullName>
    </alternativeName>
    <alternativeName>
        <fullName evidence="1">NDH-1 subunit C</fullName>
    </alternativeName>
</protein>
<comment type="function">
    <text evidence="1">NDH-1 shuttles electrons from NADH, via FMN and iron-sulfur (Fe-S) centers, to quinones in the respiratory chain. The immediate electron acceptor for the enzyme in this species is believed to be a menaquinone. Couples the redox reaction to proton translocation (for every two electrons transferred, four hydrogen ions are translocated across the cytoplasmic membrane), and thus conserves the redox energy in a proton gradient.</text>
</comment>
<comment type="catalytic activity">
    <reaction evidence="1">
        <text>a quinone + NADH + 5 H(+)(in) = a quinol + NAD(+) + 4 H(+)(out)</text>
        <dbReference type="Rhea" id="RHEA:57888"/>
        <dbReference type="ChEBI" id="CHEBI:15378"/>
        <dbReference type="ChEBI" id="CHEBI:24646"/>
        <dbReference type="ChEBI" id="CHEBI:57540"/>
        <dbReference type="ChEBI" id="CHEBI:57945"/>
        <dbReference type="ChEBI" id="CHEBI:132124"/>
    </reaction>
</comment>
<comment type="subunit">
    <text evidence="1">NDH-1 is composed of 14 different subunits. Subunits NuoB, C, D, E, F, and G constitute the peripheral sector of the complex.</text>
</comment>
<comment type="subcellular location">
    <subcellularLocation>
        <location evidence="1">Cell membrane</location>
        <topology evidence="1">Peripheral membrane protein</topology>
        <orientation evidence="1">Cytoplasmic side</orientation>
    </subcellularLocation>
</comment>
<comment type="similarity">
    <text evidence="1">Belongs to the complex I 30 kDa subunit family.</text>
</comment>
<feature type="chain" id="PRO_0000118670" description="NADH-quinone oxidoreductase subunit C">
    <location>
        <begin position="1"/>
        <end position="236"/>
    </location>
</feature>
<feature type="region of interest" description="Disordered" evidence="2">
    <location>
        <begin position="1"/>
        <end position="20"/>
    </location>
</feature>
<proteinExistence type="evidence at protein level"/>